<comment type="function">
    <text evidence="1">Ferredoxins are iron-sulfur proteins that transfer electrons in a wide variety of metabolic reactions.</text>
</comment>
<comment type="cofactor">
    <cofactor evidence="1">
        <name>[2Fe-2S] cluster</name>
        <dbReference type="ChEBI" id="CHEBI:190135"/>
    </cofactor>
    <text evidence="1">Binds 1 [2Fe-2S] cluster.</text>
</comment>
<comment type="subunit">
    <text evidence="1">Forms a complex with heterodimeric ferredoxin-thioredoxin reductase (FTR) and thioredoxin.</text>
</comment>
<comment type="subcellular location">
    <subcellularLocation>
        <location>Plastid</location>
        <location>Chloroplast</location>
    </subcellularLocation>
</comment>
<comment type="similarity">
    <text evidence="3">Belongs to the 2Fe2S plant-type ferredoxin family.</text>
</comment>
<proteinExistence type="evidence at transcript level"/>
<protein>
    <recommendedName>
        <fullName>Ferredoxin, chloroplastic</fullName>
    </recommendedName>
</protein>
<keyword id="KW-0001">2Fe-2S</keyword>
<keyword id="KW-0150">Chloroplast</keyword>
<keyword id="KW-0249">Electron transport</keyword>
<keyword id="KW-0408">Iron</keyword>
<keyword id="KW-0411">Iron-sulfur</keyword>
<keyword id="KW-0479">Metal-binding</keyword>
<keyword id="KW-0934">Plastid</keyword>
<keyword id="KW-1185">Reference proteome</keyword>
<keyword id="KW-0809">Transit peptide</keyword>
<keyword id="KW-0813">Transport</keyword>
<sequence length="145" mass="15217">MAAAAMTSIVPVASIAPVSKVANVRPSSVSVAKAFGLKSRSMGRLTCMATYKVTFLDGETGAENVVECSDEEYVLDAAERAGMDLPYSCRAGACSSCAGIIKAGEVDQSDQSFLDDSQIDDGFVLTCVAYPASDCIILTHQEENM</sequence>
<gene>
    <name type="primary">PETF</name>
    <name type="ORF">PHYPADRAFT_190267</name>
    <name type="ORF">PHYPADRAFT_190462</name>
</gene>
<dbReference type="EMBL" id="Y12734">
    <property type="protein sequence ID" value="CAA73265.1"/>
    <property type="molecule type" value="mRNA"/>
</dbReference>
<dbReference type="EMBL" id="DS545032">
    <property type="protein sequence ID" value="EDQ63350.1"/>
    <property type="molecule type" value="Genomic_DNA"/>
</dbReference>
<dbReference type="EMBL" id="DS545035">
    <property type="protein sequence ID" value="EDQ63083.1"/>
    <property type="molecule type" value="Genomic_DNA"/>
</dbReference>
<dbReference type="RefSeq" id="XP_001771921.1">
    <property type="nucleotide sequence ID" value="XM_001771869.1"/>
</dbReference>
<dbReference type="RefSeq" id="XP_001772139.1">
    <property type="nucleotide sequence ID" value="XM_001772087.1"/>
</dbReference>
<dbReference type="SMR" id="O04166"/>
<dbReference type="FunCoup" id="O04166">
    <property type="interactions" value="1034"/>
</dbReference>
<dbReference type="PaxDb" id="3218-PP1S143_176V6.1"/>
<dbReference type="EnsemblPlants" id="Pp3c4_8159V3.1">
    <property type="protein sequence ID" value="PAC:32919644.CDS.1"/>
    <property type="gene ID" value="Pp3c4_8159"/>
</dbReference>
<dbReference type="EnsemblPlants" id="Pp3c4_8330V3.1">
    <property type="protein sequence ID" value="PAC:32919949.CDS.1"/>
    <property type="gene ID" value="Pp3c4_8330"/>
</dbReference>
<dbReference type="EnsemblPlants" id="Pp3c4_8330V3.2">
    <property type="protein sequence ID" value="PAC:32919950.CDS.1"/>
    <property type="gene ID" value="Pp3c4_8330"/>
</dbReference>
<dbReference type="Gramene" id="Pp3c4_8159V3.1">
    <property type="protein sequence ID" value="PAC:32919644.CDS.1"/>
    <property type="gene ID" value="Pp3c4_8159"/>
</dbReference>
<dbReference type="Gramene" id="Pp3c4_8330V3.1">
    <property type="protein sequence ID" value="PAC:32919949.CDS.1"/>
    <property type="gene ID" value="Pp3c4_8330"/>
</dbReference>
<dbReference type="Gramene" id="Pp3c4_8330V3.2">
    <property type="protein sequence ID" value="PAC:32919950.CDS.1"/>
    <property type="gene ID" value="Pp3c4_8330"/>
</dbReference>
<dbReference type="eggNOG" id="ENOG502S3RJ">
    <property type="taxonomic scope" value="Eukaryota"/>
</dbReference>
<dbReference type="HOGENOM" id="CLU_082632_1_1_1"/>
<dbReference type="InParanoid" id="O04166"/>
<dbReference type="OMA" id="KITCMAT"/>
<dbReference type="OrthoDB" id="1885901at2759"/>
<dbReference type="Proteomes" id="UP000006727">
    <property type="component" value="Chromosome 4"/>
</dbReference>
<dbReference type="GO" id="GO:0009507">
    <property type="term" value="C:chloroplast"/>
    <property type="evidence" value="ECO:0007669"/>
    <property type="project" value="UniProtKB-SubCell"/>
</dbReference>
<dbReference type="GO" id="GO:0051537">
    <property type="term" value="F:2 iron, 2 sulfur cluster binding"/>
    <property type="evidence" value="ECO:0007669"/>
    <property type="project" value="UniProtKB-KW"/>
</dbReference>
<dbReference type="GO" id="GO:0009055">
    <property type="term" value="F:electron transfer activity"/>
    <property type="evidence" value="ECO:0007669"/>
    <property type="project" value="InterPro"/>
</dbReference>
<dbReference type="GO" id="GO:0046872">
    <property type="term" value="F:metal ion binding"/>
    <property type="evidence" value="ECO:0007669"/>
    <property type="project" value="UniProtKB-KW"/>
</dbReference>
<dbReference type="GO" id="GO:0022900">
    <property type="term" value="P:electron transport chain"/>
    <property type="evidence" value="ECO:0007669"/>
    <property type="project" value="InterPro"/>
</dbReference>
<dbReference type="CDD" id="cd00207">
    <property type="entry name" value="fer2"/>
    <property type="match status" value="1"/>
</dbReference>
<dbReference type="FunFam" id="3.10.20.30:FF:000014">
    <property type="entry name" value="Ferredoxin"/>
    <property type="match status" value="1"/>
</dbReference>
<dbReference type="Gene3D" id="3.10.20.30">
    <property type="match status" value="1"/>
</dbReference>
<dbReference type="InterPro" id="IPR036010">
    <property type="entry name" value="2Fe-2S_ferredoxin-like_sf"/>
</dbReference>
<dbReference type="InterPro" id="IPR001041">
    <property type="entry name" value="2Fe-2S_ferredoxin-type"/>
</dbReference>
<dbReference type="InterPro" id="IPR006058">
    <property type="entry name" value="2Fe2S_fd_BS"/>
</dbReference>
<dbReference type="InterPro" id="IPR012675">
    <property type="entry name" value="Beta-grasp_dom_sf"/>
</dbReference>
<dbReference type="InterPro" id="IPR010241">
    <property type="entry name" value="Fd_pln"/>
</dbReference>
<dbReference type="NCBIfam" id="TIGR02008">
    <property type="entry name" value="fdx_plant"/>
    <property type="match status" value="1"/>
</dbReference>
<dbReference type="PANTHER" id="PTHR43112">
    <property type="entry name" value="FERREDOXIN"/>
    <property type="match status" value="1"/>
</dbReference>
<dbReference type="PANTHER" id="PTHR43112:SF3">
    <property type="entry name" value="FERREDOXIN-2, CHLOROPLASTIC"/>
    <property type="match status" value="1"/>
</dbReference>
<dbReference type="Pfam" id="PF00111">
    <property type="entry name" value="Fer2"/>
    <property type="match status" value="1"/>
</dbReference>
<dbReference type="SUPFAM" id="SSF54292">
    <property type="entry name" value="2Fe-2S ferredoxin-like"/>
    <property type="match status" value="1"/>
</dbReference>
<dbReference type="PROSITE" id="PS00197">
    <property type="entry name" value="2FE2S_FER_1"/>
    <property type="match status" value="1"/>
</dbReference>
<dbReference type="PROSITE" id="PS51085">
    <property type="entry name" value="2FE2S_FER_2"/>
    <property type="match status" value="1"/>
</dbReference>
<feature type="transit peptide" description="Chloroplast" evidence="1">
    <location>
        <begin position="1"/>
        <end position="48"/>
    </location>
</feature>
<feature type="chain" id="PRO_0000008837" description="Ferredoxin, chloroplastic">
    <location>
        <begin position="49"/>
        <end position="145"/>
    </location>
</feature>
<feature type="domain" description="2Fe-2S ferredoxin-type" evidence="2">
    <location>
        <begin position="51"/>
        <end position="143"/>
    </location>
</feature>
<feature type="binding site" evidence="2">
    <location>
        <position position="89"/>
    </location>
    <ligand>
        <name>[2Fe-2S] cluster</name>
        <dbReference type="ChEBI" id="CHEBI:190135"/>
    </ligand>
</feature>
<feature type="binding site" evidence="2">
    <location>
        <position position="94"/>
    </location>
    <ligand>
        <name>[2Fe-2S] cluster</name>
        <dbReference type="ChEBI" id="CHEBI:190135"/>
    </ligand>
</feature>
<feature type="binding site" evidence="2">
    <location>
        <position position="97"/>
    </location>
    <ligand>
        <name>[2Fe-2S] cluster</name>
        <dbReference type="ChEBI" id="CHEBI:190135"/>
    </ligand>
</feature>
<feature type="binding site" evidence="2">
    <location>
        <position position="127"/>
    </location>
    <ligand>
        <name>[2Fe-2S] cluster</name>
        <dbReference type="ChEBI" id="CHEBI:190135"/>
    </ligand>
</feature>
<accession>O04166</accession>
<accession>A9SZY5</accession>
<name>FER_PHYPA</name>
<evidence type="ECO:0000250" key="1"/>
<evidence type="ECO:0000255" key="2">
    <source>
        <dbReference type="PROSITE-ProRule" id="PRU00465"/>
    </source>
</evidence>
<evidence type="ECO:0000305" key="3"/>
<organism>
    <name type="scientific">Physcomitrium patens</name>
    <name type="common">Spreading-leaved earth moss</name>
    <name type="synonym">Physcomitrella patens</name>
    <dbReference type="NCBI Taxonomy" id="3218"/>
    <lineage>
        <taxon>Eukaryota</taxon>
        <taxon>Viridiplantae</taxon>
        <taxon>Streptophyta</taxon>
        <taxon>Embryophyta</taxon>
        <taxon>Bryophyta</taxon>
        <taxon>Bryophytina</taxon>
        <taxon>Bryopsida</taxon>
        <taxon>Funariidae</taxon>
        <taxon>Funariales</taxon>
        <taxon>Funariaceae</taxon>
        <taxon>Physcomitrium</taxon>
    </lineage>
</organism>
<reference key="1">
    <citation type="submission" date="1997-04" db="EMBL/GenBank/DDBJ databases">
        <title>Transcriptional analysis of ferredoxin from a moss.</title>
        <authorList>
            <person name="Kleber-Janke T."/>
            <person name="Wehe M."/>
            <person name="Kruse S."/>
            <person name="Reski R."/>
        </authorList>
    </citation>
    <scope>NUCLEOTIDE SEQUENCE [MRNA]</scope>
</reference>
<reference key="2">
    <citation type="journal article" date="2008" name="Science">
        <title>The Physcomitrella genome reveals evolutionary insights into the conquest of land by plants.</title>
        <authorList>
            <person name="Rensing S.A."/>
            <person name="Lang D."/>
            <person name="Zimmer A.D."/>
            <person name="Terry A."/>
            <person name="Salamov A."/>
            <person name="Shapiro H."/>
            <person name="Nishiyama T."/>
            <person name="Perroud P.-F."/>
            <person name="Lindquist E.A."/>
            <person name="Kamisugi Y."/>
            <person name="Tanahashi T."/>
            <person name="Sakakibara K."/>
            <person name="Fujita T."/>
            <person name="Oishi K."/>
            <person name="Shin-I T."/>
            <person name="Kuroki Y."/>
            <person name="Toyoda A."/>
            <person name="Suzuki Y."/>
            <person name="Hashimoto S.-I."/>
            <person name="Yamaguchi K."/>
            <person name="Sugano S."/>
            <person name="Kohara Y."/>
            <person name="Fujiyama A."/>
            <person name="Anterola A."/>
            <person name="Aoki S."/>
            <person name="Ashton N."/>
            <person name="Barbazuk W.B."/>
            <person name="Barker E."/>
            <person name="Bennetzen J.L."/>
            <person name="Blankenship R."/>
            <person name="Cho S.H."/>
            <person name="Dutcher S.K."/>
            <person name="Estelle M."/>
            <person name="Fawcett J.A."/>
            <person name="Gundlach H."/>
            <person name="Hanada K."/>
            <person name="Heyl A."/>
            <person name="Hicks K.A."/>
            <person name="Hughes J."/>
            <person name="Lohr M."/>
            <person name="Mayer K."/>
            <person name="Melkozernov A."/>
            <person name="Murata T."/>
            <person name="Nelson D.R."/>
            <person name="Pils B."/>
            <person name="Prigge M."/>
            <person name="Reiss B."/>
            <person name="Renner T."/>
            <person name="Rombauts S."/>
            <person name="Rushton P.J."/>
            <person name="Sanderfoot A."/>
            <person name="Schween G."/>
            <person name="Shiu S.-H."/>
            <person name="Stueber K."/>
            <person name="Theodoulou F.L."/>
            <person name="Tu H."/>
            <person name="Van de Peer Y."/>
            <person name="Verrier P.J."/>
            <person name="Waters E."/>
            <person name="Wood A."/>
            <person name="Yang L."/>
            <person name="Cove D."/>
            <person name="Cuming A.C."/>
            <person name="Hasebe M."/>
            <person name="Lucas S."/>
            <person name="Mishler B.D."/>
            <person name="Reski R."/>
            <person name="Grigoriev I.V."/>
            <person name="Quatrano R.S."/>
            <person name="Boore J.L."/>
        </authorList>
    </citation>
    <scope>NUCLEOTIDE SEQUENCE [LARGE SCALE GENOMIC DNA]</scope>
    <source>
        <strain>cv. Gransden 2004</strain>
    </source>
</reference>